<evidence type="ECO:0000255" key="1">
    <source>
        <dbReference type="HAMAP-Rule" id="MF_00657"/>
    </source>
</evidence>
<dbReference type="EC" id="1.14.11.-" evidence="1"/>
<dbReference type="EMBL" id="CP000441">
    <property type="protein sequence ID" value="ABI90029.1"/>
    <property type="molecule type" value="Genomic_DNA"/>
</dbReference>
<dbReference type="RefSeq" id="WP_011659455.1">
    <property type="nucleotide sequence ID" value="NZ_CP009799.1"/>
</dbReference>
<dbReference type="SMR" id="Q0B744"/>
<dbReference type="KEGG" id="bam:Bamb_4479"/>
<dbReference type="PATRIC" id="fig|339670.21.peg.4807"/>
<dbReference type="eggNOG" id="COG3128">
    <property type="taxonomic scope" value="Bacteria"/>
</dbReference>
<dbReference type="Proteomes" id="UP000000662">
    <property type="component" value="Chromosome 2"/>
</dbReference>
<dbReference type="GO" id="GO:0016706">
    <property type="term" value="F:2-oxoglutarate-dependent dioxygenase activity"/>
    <property type="evidence" value="ECO:0007669"/>
    <property type="project" value="UniProtKB-UniRule"/>
</dbReference>
<dbReference type="GO" id="GO:0005506">
    <property type="term" value="F:iron ion binding"/>
    <property type="evidence" value="ECO:0007669"/>
    <property type="project" value="UniProtKB-UniRule"/>
</dbReference>
<dbReference type="GO" id="GO:0031418">
    <property type="term" value="F:L-ascorbic acid binding"/>
    <property type="evidence" value="ECO:0007669"/>
    <property type="project" value="UniProtKB-KW"/>
</dbReference>
<dbReference type="GO" id="GO:0006974">
    <property type="term" value="P:DNA damage response"/>
    <property type="evidence" value="ECO:0007669"/>
    <property type="project" value="TreeGrafter"/>
</dbReference>
<dbReference type="GO" id="GO:0006879">
    <property type="term" value="P:intracellular iron ion homeostasis"/>
    <property type="evidence" value="ECO:0007669"/>
    <property type="project" value="TreeGrafter"/>
</dbReference>
<dbReference type="Gene3D" id="2.60.120.620">
    <property type="entry name" value="q2cbj1_9rhob like domain"/>
    <property type="match status" value="1"/>
</dbReference>
<dbReference type="Gene3D" id="4.10.860.20">
    <property type="entry name" value="Rabenosyn, Rab binding domain"/>
    <property type="match status" value="1"/>
</dbReference>
<dbReference type="HAMAP" id="MF_00657">
    <property type="entry name" value="Hydroxyl_YbiX"/>
    <property type="match status" value="1"/>
</dbReference>
<dbReference type="InterPro" id="IPR005123">
    <property type="entry name" value="Oxoglu/Fe-dep_dioxygenase_dom"/>
</dbReference>
<dbReference type="InterPro" id="IPR041097">
    <property type="entry name" value="PKHD_C"/>
</dbReference>
<dbReference type="InterPro" id="IPR023550">
    <property type="entry name" value="PKHD_hydroxylase"/>
</dbReference>
<dbReference type="InterPro" id="IPR006620">
    <property type="entry name" value="Pro_4_hyd_alph"/>
</dbReference>
<dbReference type="InterPro" id="IPR044862">
    <property type="entry name" value="Pro_4_hyd_alph_FE2OG_OXY"/>
</dbReference>
<dbReference type="NCBIfam" id="NF003974">
    <property type="entry name" value="PRK05467.1-3"/>
    <property type="match status" value="1"/>
</dbReference>
<dbReference type="NCBIfam" id="NF003975">
    <property type="entry name" value="PRK05467.1-4"/>
    <property type="match status" value="1"/>
</dbReference>
<dbReference type="PANTHER" id="PTHR41536">
    <property type="entry name" value="PKHD-TYPE HYDROXYLASE YBIX"/>
    <property type="match status" value="1"/>
</dbReference>
<dbReference type="PANTHER" id="PTHR41536:SF1">
    <property type="entry name" value="PKHD-TYPE HYDROXYLASE YBIX"/>
    <property type="match status" value="1"/>
</dbReference>
<dbReference type="Pfam" id="PF13640">
    <property type="entry name" value="2OG-FeII_Oxy_3"/>
    <property type="match status" value="1"/>
</dbReference>
<dbReference type="Pfam" id="PF18331">
    <property type="entry name" value="PKHD_C"/>
    <property type="match status" value="1"/>
</dbReference>
<dbReference type="SMART" id="SM00702">
    <property type="entry name" value="P4Hc"/>
    <property type="match status" value="1"/>
</dbReference>
<dbReference type="SUPFAM" id="SSF51197">
    <property type="entry name" value="Clavaminate synthase-like"/>
    <property type="match status" value="1"/>
</dbReference>
<dbReference type="PROSITE" id="PS51471">
    <property type="entry name" value="FE2OG_OXY"/>
    <property type="match status" value="1"/>
</dbReference>
<organism>
    <name type="scientific">Burkholderia ambifaria (strain ATCC BAA-244 / DSM 16087 / CCUG 44356 / LMG 19182 / AMMD)</name>
    <name type="common">Burkholderia cepacia (strain AMMD)</name>
    <dbReference type="NCBI Taxonomy" id="339670"/>
    <lineage>
        <taxon>Bacteria</taxon>
        <taxon>Pseudomonadati</taxon>
        <taxon>Pseudomonadota</taxon>
        <taxon>Betaproteobacteria</taxon>
        <taxon>Burkholderiales</taxon>
        <taxon>Burkholderiaceae</taxon>
        <taxon>Burkholderia</taxon>
        <taxon>Burkholderia cepacia complex</taxon>
    </lineage>
</organism>
<proteinExistence type="inferred from homology"/>
<name>Y4479_BURCM</name>
<gene>
    <name type="ordered locus">Bamb_4479</name>
</gene>
<sequence>MLVHIPNVLTPEQVSMVRDRLDRAGDAWVDGRATAGYTGAPVKRNQQIAEHSPIARELGDVILAALERNPLFISAALPNQVYPPLFNRYEGGMTFGSHVDGAVRVLPNGVKLRTDVSVTLFLSAPDEYDGGELVIEDAYGVQQVKLPAGDMIVYPATSLHQVTPVTRGVRVASFFWVQSLVRSDAQRALLFDMDTAIQRLNASGADTDACRSLVGCYHNLLRIWSET</sequence>
<protein>
    <recommendedName>
        <fullName evidence="1">PKHD-type hydroxylase Bamb_4479</fullName>
        <ecNumber evidence="1">1.14.11.-</ecNumber>
    </recommendedName>
</protein>
<comment type="cofactor">
    <cofactor evidence="1">
        <name>Fe(2+)</name>
        <dbReference type="ChEBI" id="CHEBI:29033"/>
    </cofactor>
    <text evidence="1">Binds 1 Fe(2+) ion per subunit.</text>
</comment>
<comment type="cofactor">
    <cofactor evidence="1">
        <name>L-ascorbate</name>
        <dbReference type="ChEBI" id="CHEBI:38290"/>
    </cofactor>
</comment>
<keyword id="KW-0223">Dioxygenase</keyword>
<keyword id="KW-0408">Iron</keyword>
<keyword id="KW-0479">Metal-binding</keyword>
<keyword id="KW-0560">Oxidoreductase</keyword>
<keyword id="KW-0847">Vitamin C</keyword>
<accession>Q0B744</accession>
<feature type="chain" id="PRO_0000346468" description="PKHD-type hydroxylase Bamb_4479">
    <location>
        <begin position="1"/>
        <end position="227"/>
    </location>
</feature>
<feature type="domain" description="Fe2OG dioxygenase" evidence="1">
    <location>
        <begin position="80"/>
        <end position="179"/>
    </location>
</feature>
<feature type="binding site" evidence="1">
    <location>
        <position position="98"/>
    </location>
    <ligand>
        <name>Fe cation</name>
        <dbReference type="ChEBI" id="CHEBI:24875"/>
    </ligand>
</feature>
<feature type="binding site" evidence="1">
    <location>
        <position position="100"/>
    </location>
    <ligand>
        <name>Fe cation</name>
        <dbReference type="ChEBI" id="CHEBI:24875"/>
    </ligand>
</feature>
<feature type="binding site" evidence="1">
    <location>
        <position position="160"/>
    </location>
    <ligand>
        <name>Fe cation</name>
        <dbReference type="ChEBI" id="CHEBI:24875"/>
    </ligand>
</feature>
<feature type="binding site" evidence="1">
    <location>
        <position position="170"/>
    </location>
    <ligand>
        <name>2-oxoglutarate</name>
        <dbReference type="ChEBI" id="CHEBI:16810"/>
    </ligand>
</feature>
<reference key="1">
    <citation type="submission" date="2006-08" db="EMBL/GenBank/DDBJ databases">
        <title>Complete sequence of chromosome 2 of Burkholderia cepacia AMMD.</title>
        <authorList>
            <person name="Copeland A."/>
            <person name="Lucas S."/>
            <person name="Lapidus A."/>
            <person name="Barry K."/>
            <person name="Detter J.C."/>
            <person name="Glavina del Rio T."/>
            <person name="Hammon N."/>
            <person name="Israni S."/>
            <person name="Pitluck S."/>
            <person name="Bruce D."/>
            <person name="Chain P."/>
            <person name="Malfatti S."/>
            <person name="Shin M."/>
            <person name="Vergez L."/>
            <person name="Schmutz J."/>
            <person name="Larimer F."/>
            <person name="Land M."/>
            <person name="Hauser L."/>
            <person name="Kyrpides N."/>
            <person name="Kim E."/>
            <person name="Parke J."/>
            <person name="Coenye T."/>
            <person name="Konstantinidis K."/>
            <person name="Ramette A."/>
            <person name="Tiedje J."/>
            <person name="Richardson P."/>
        </authorList>
    </citation>
    <scope>NUCLEOTIDE SEQUENCE [LARGE SCALE GENOMIC DNA]</scope>
    <source>
        <strain>ATCC BAA-244 / DSM 16087 / CCUG 44356 / LMG 19182 / AMMD</strain>
    </source>
</reference>